<proteinExistence type="evidence at protein level"/>
<gene>
    <name type="primary">mtnB</name>
    <name type="synonym">ykrY</name>
    <name type="ordered locus">BSU13610</name>
</gene>
<comment type="function">
    <text evidence="2">Catalyzes the dehydration of methylthioribulose-1-phosphate (MTRu-1-P) into 2,3-diketo-5-methylthiopentyl-1-phosphate (DK-MTP-1-P).</text>
</comment>
<comment type="catalytic activity">
    <reaction>
        <text>5-(methylsulfanyl)-D-ribulose 1-phosphate = 5-methylsulfanyl-2,3-dioxopentyl phosphate + H2O</text>
        <dbReference type="Rhea" id="RHEA:15549"/>
        <dbReference type="ChEBI" id="CHEBI:15377"/>
        <dbReference type="ChEBI" id="CHEBI:58548"/>
        <dbReference type="ChEBI" id="CHEBI:58828"/>
        <dbReference type="EC" id="4.2.1.109"/>
    </reaction>
</comment>
<comment type="cofactor">
    <cofactor evidence="4">
        <name>Zn(2+)</name>
        <dbReference type="ChEBI" id="CHEBI:29105"/>
    </cofactor>
    <text evidence="4">Binds 1 zinc ion per subunit.</text>
</comment>
<comment type="biophysicochemical properties">
    <kinetics>
        <KM evidence="3">8.9 uM for S-methyl-5-thio-D-ribulose 1-phosphate (at 25 degrees Celsius)</KM>
        <Vmax evidence="3">42.7 umol/min/mg enzyme (at 25 degrees Celsius)</Vmax>
    </kinetics>
    <phDependence>
        <text evidence="3">Optimum pH is 7.5-8.5.</text>
    </phDependence>
    <temperatureDependence>
        <text evidence="3">Optimum temperature is 40 degrees Celsius. It loses most of its activity at 55 degrees Celsius.</text>
    </temperatureDependence>
</comment>
<comment type="pathway">
    <text>Amino-acid biosynthesis; L-methionine biosynthesis via salvage pathway; L-methionine from S-methyl-5-thio-alpha-D-ribose 1-phosphate: step 2/6.</text>
</comment>
<comment type="subunit">
    <text evidence="3">Homotetramer.</text>
</comment>
<comment type="similarity">
    <text evidence="4">Belongs to the aldolase class II family. MtnB subfamily.</text>
</comment>
<organism>
    <name type="scientific">Bacillus subtilis (strain 168)</name>
    <dbReference type="NCBI Taxonomy" id="224308"/>
    <lineage>
        <taxon>Bacteria</taxon>
        <taxon>Bacillati</taxon>
        <taxon>Bacillota</taxon>
        <taxon>Bacilli</taxon>
        <taxon>Bacillales</taxon>
        <taxon>Bacillaceae</taxon>
        <taxon>Bacillus</taxon>
    </lineage>
</organism>
<protein>
    <recommendedName>
        <fullName>Methylthioribulose-1-phosphate dehydratase</fullName>
        <shortName>MTRu-1-P dehydratase</shortName>
        <ecNumber>4.2.1.109</ecNumber>
    </recommendedName>
</protein>
<keyword id="KW-0028">Amino-acid biosynthesis</keyword>
<keyword id="KW-0456">Lyase</keyword>
<keyword id="KW-0479">Metal-binding</keyword>
<keyword id="KW-0486">Methionine biosynthesis</keyword>
<keyword id="KW-1185">Reference proteome</keyword>
<keyword id="KW-0862">Zinc</keyword>
<feature type="chain" id="PRO_0000162937" description="Methylthioribulose-1-phosphate dehydratase">
    <location>
        <begin position="1"/>
        <end position="209"/>
    </location>
</feature>
<feature type="binding site" evidence="1">
    <location>
        <position position="98"/>
    </location>
    <ligand>
        <name>Zn(2+)</name>
        <dbReference type="ChEBI" id="CHEBI:29105"/>
    </ligand>
</feature>
<feature type="binding site" evidence="1">
    <location>
        <position position="100"/>
    </location>
    <ligand>
        <name>Zn(2+)</name>
        <dbReference type="ChEBI" id="CHEBI:29105"/>
    </ligand>
</feature>
<evidence type="ECO:0000250" key="1"/>
<evidence type="ECO:0000269" key="2">
    <source>
    </source>
</evidence>
<evidence type="ECO:0000269" key="3">
    <source>
    </source>
</evidence>
<evidence type="ECO:0000305" key="4"/>
<reference key="1">
    <citation type="journal article" date="1997" name="Nature">
        <title>The complete genome sequence of the Gram-positive bacterium Bacillus subtilis.</title>
        <authorList>
            <person name="Kunst F."/>
            <person name="Ogasawara N."/>
            <person name="Moszer I."/>
            <person name="Albertini A.M."/>
            <person name="Alloni G."/>
            <person name="Azevedo V."/>
            <person name="Bertero M.G."/>
            <person name="Bessieres P."/>
            <person name="Bolotin A."/>
            <person name="Borchert S."/>
            <person name="Borriss R."/>
            <person name="Boursier L."/>
            <person name="Brans A."/>
            <person name="Braun M."/>
            <person name="Brignell S.C."/>
            <person name="Bron S."/>
            <person name="Brouillet S."/>
            <person name="Bruschi C.V."/>
            <person name="Caldwell B."/>
            <person name="Capuano V."/>
            <person name="Carter N.M."/>
            <person name="Choi S.-K."/>
            <person name="Codani J.-J."/>
            <person name="Connerton I.F."/>
            <person name="Cummings N.J."/>
            <person name="Daniel R.A."/>
            <person name="Denizot F."/>
            <person name="Devine K.M."/>
            <person name="Duesterhoeft A."/>
            <person name="Ehrlich S.D."/>
            <person name="Emmerson P.T."/>
            <person name="Entian K.-D."/>
            <person name="Errington J."/>
            <person name="Fabret C."/>
            <person name="Ferrari E."/>
            <person name="Foulger D."/>
            <person name="Fritz C."/>
            <person name="Fujita M."/>
            <person name="Fujita Y."/>
            <person name="Fuma S."/>
            <person name="Galizzi A."/>
            <person name="Galleron N."/>
            <person name="Ghim S.-Y."/>
            <person name="Glaser P."/>
            <person name="Goffeau A."/>
            <person name="Golightly E.J."/>
            <person name="Grandi G."/>
            <person name="Guiseppi G."/>
            <person name="Guy B.J."/>
            <person name="Haga K."/>
            <person name="Haiech J."/>
            <person name="Harwood C.R."/>
            <person name="Henaut A."/>
            <person name="Hilbert H."/>
            <person name="Holsappel S."/>
            <person name="Hosono S."/>
            <person name="Hullo M.-F."/>
            <person name="Itaya M."/>
            <person name="Jones L.-M."/>
            <person name="Joris B."/>
            <person name="Karamata D."/>
            <person name="Kasahara Y."/>
            <person name="Klaerr-Blanchard M."/>
            <person name="Klein C."/>
            <person name="Kobayashi Y."/>
            <person name="Koetter P."/>
            <person name="Koningstein G."/>
            <person name="Krogh S."/>
            <person name="Kumano M."/>
            <person name="Kurita K."/>
            <person name="Lapidus A."/>
            <person name="Lardinois S."/>
            <person name="Lauber J."/>
            <person name="Lazarevic V."/>
            <person name="Lee S.-M."/>
            <person name="Levine A."/>
            <person name="Liu H."/>
            <person name="Masuda S."/>
            <person name="Mauel C."/>
            <person name="Medigue C."/>
            <person name="Medina N."/>
            <person name="Mellado R.P."/>
            <person name="Mizuno M."/>
            <person name="Moestl D."/>
            <person name="Nakai S."/>
            <person name="Noback M."/>
            <person name="Noone D."/>
            <person name="O'Reilly M."/>
            <person name="Ogawa K."/>
            <person name="Ogiwara A."/>
            <person name="Oudega B."/>
            <person name="Park S.-H."/>
            <person name="Parro V."/>
            <person name="Pohl T.M."/>
            <person name="Portetelle D."/>
            <person name="Porwollik S."/>
            <person name="Prescott A.M."/>
            <person name="Presecan E."/>
            <person name="Pujic P."/>
            <person name="Purnelle B."/>
            <person name="Rapoport G."/>
            <person name="Rey M."/>
            <person name="Reynolds S."/>
            <person name="Rieger M."/>
            <person name="Rivolta C."/>
            <person name="Rocha E."/>
            <person name="Roche B."/>
            <person name="Rose M."/>
            <person name="Sadaie Y."/>
            <person name="Sato T."/>
            <person name="Scanlan E."/>
            <person name="Schleich S."/>
            <person name="Schroeter R."/>
            <person name="Scoffone F."/>
            <person name="Sekiguchi J."/>
            <person name="Sekowska A."/>
            <person name="Seror S.J."/>
            <person name="Serror P."/>
            <person name="Shin B.-S."/>
            <person name="Soldo B."/>
            <person name="Sorokin A."/>
            <person name="Tacconi E."/>
            <person name="Takagi T."/>
            <person name="Takahashi H."/>
            <person name="Takemaru K."/>
            <person name="Takeuchi M."/>
            <person name="Tamakoshi A."/>
            <person name="Tanaka T."/>
            <person name="Terpstra P."/>
            <person name="Tognoni A."/>
            <person name="Tosato V."/>
            <person name="Uchiyama S."/>
            <person name="Vandenbol M."/>
            <person name="Vannier F."/>
            <person name="Vassarotti A."/>
            <person name="Viari A."/>
            <person name="Wambutt R."/>
            <person name="Wedler E."/>
            <person name="Wedler H."/>
            <person name="Weitzenegger T."/>
            <person name="Winters P."/>
            <person name="Wipat A."/>
            <person name="Yamamoto H."/>
            <person name="Yamane K."/>
            <person name="Yasumoto K."/>
            <person name="Yata K."/>
            <person name="Yoshida K."/>
            <person name="Yoshikawa H.-F."/>
            <person name="Zumstein E."/>
            <person name="Yoshikawa H."/>
            <person name="Danchin A."/>
        </authorList>
    </citation>
    <scope>NUCLEOTIDE SEQUENCE [LARGE SCALE GENOMIC DNA]</scope>
    <source>
        <strain>168</strain>
    </source>
</reference>
<reference key="2">
    <citation type="journal article" date="2002" name="BMC Microbiol.">
        <title>The methionine salvage pathway in Bacillus subtilis.</title>
        <authorList>
            <person name="Sekowska A."/>
            <person name="Danchin A."/>
        </authorList>
    </citation>
    <scope>REVIEW</scope>
</reference>
<reference key="3">
    <citation type="journal article" date="2003" name="Science">
        <title>A functional link between RuBisCO-like protein of Bacillus and photosynthetic RuBisCO.</title>
        <authorList>
            <person name="Ashida H."/>
            <person name="Saito Y."/>
            <person name="Kojima C."/>
            <person name="Kobayashi K."/>
            <person name="Ogasawara N."/>
            <person name="Yokota A."/>
        </authorList>
    </citation>
    <scope>FUNCTION</scope>
</reference>
<reference key="4">
    <citation type="journal article" date="2004" name="BMC Microbiol.">
        <title>Bacterial variations on the methionine salvage pathway.</title>
        <authorList>
            <person name="Sekowska A."/>
            <person name="Denervaud V."/>
            <person name="Ashida H."/>
            <person name="Michoud K."/>
            <person name="Haas D."/>
            <person name="Yokota A."/>
            <person name="Danchin A."/>
        </authorList>
    </citation>
    <scope>NOMENCLATURE</scope>
</reference>
<reference key="5">
    <citation type="journal article" date="2008" name="Biosci. Biotechnol. Biochem.">
        <title>Enzymatic characterization of 5-methylthioribulose-1-phosphate dehydratase of the methionine salvage pathway in Bacillus subtilis.</title>
        <authorList>
            <person name="Ashida H."/>
            <person name="Saito Y."/>
            <person name="Kojima C."/>
            <person name="Yokota A."/>
        </authorList>
    </citation>
    <scope>BIOPHYSICOCHEMICAL PROPERTIES</scope>
    <scope>SUBUNIT</scope>
    <source>
        <strain>168</strain>
    </source>
</reference>
<sequence>MAAKQERWRELAEVKRELAERDWFPATSGNLSIKVTDEPLTFLVTASGKDKRKETVEDFLLVDQNGEPAESGHSLKPSAETLLHTHLYNKTNAGCCLHVHTVNNNVISELYGDQKKITFKGQEIIKALGLWEENAEVTVPIIENPAHIPTLAALFAEEISEDSGAVLIRNHGITAWGKTAFEAKRVLEAYEFLFSYHLKLKTLEHQLVK</sequence>
<dbReference type="EC" id="4.2.1.109"/>
<dbReference type="EMBL" id="AL009126">
    <property type="protein sequence ID" value="CAB13234.1"/>
    <property type="molecule type" value="Genomic_DNA"/>
</dbReference>
<dbReference type="PIR" id="A69864">
    <property type="entry name" value="A69864"/>
</dbReference>
<dbReference type="RefSeq" id="NP_389244.1">
    <property type="nucleotide sequence ID" value="NC_000964.3"/>
</dbReference>
<dbReference type="RefSeq" id="WP_003244782.1">
    <property type="nucleotide sequence ID" value="NZ_OZ025638.1"/>
</dbReference>
<dbReference type="SMR" id="O31668"/>
<dbReference type="FunCoup" id="O31668">
    <property type="interactions" value="357"/>
</dbReference>
<dbReference type="STRING" id="224308.BSU13610"/>
<dbReference type="PaxDb" id="224308-BSU13610"/>
<dbReference type="EnsemblBacteria" id="CAB13234">
    <property type="protein sequence ID" value="CAB13234"/>
    <property type="gene ID" value="BSU_13610"/>
</dbReference>
<dbReference type="GeneID" id="939320"/>
<dbReference type="KEGG" id="bsu:BSU13610"/>
<dbReference type="PATRIC" id="fig|224308.179.peg.1478"/>
<dbReference type="eggNOG" id="COG0235">
    <property type="taxonomic scope" value="Bacteria"/>
</dbReference>
<dbReference type="InParanoid" id="O31668"/>
<dbReference type="OrthoDB" id="9805559at2"/>
<dbReference type="PhylomeDB" id="O31668"/>
<dbReference type="BioCyc" id="BSUB:BSU13610-MONOMER"/>
<dbReference type="BioCyc" id="MetaCyc:BSU13610-MONOMER"/>
<dbReference type="UniPathway" id="UPA00904">
    <property type="reaction ID" value="UER00875"/>
</dbReference>
<dbReference type="Proteomes" id="UP000001570">
    <property type="component" value="Chromosome"/>
</dbReference>
<dbReference type="GO" id="GO:0005737">
    <property type="term" value="C:cytoplasm"/>
    <property type="evidence" value="ECO:0000318"/>
    <property type="project" value="GO_Central"/>
</dbReference>
<dbReference type="GO" id="GO:0046570">
    <property type="term" value="F:methylthioribulose 1-phosphate dehydratase activity"/>
    <property type="evidence" value="ECO:0000318"/>
    <property type="project" value="GO_Central"/>
</dbReference>
<dbReference type="GO" id="GO:0008270">
    <property type="term" value="F:zinc ion binding"/>
    <property type="evidence" value="ECO:0007669"/>
    <property type="project" value="UniProtKB-UniRule"/>
</dbReference>
<dbReference type="GO" id="GO:0019509">
    <property type="term" value="P:L-methionine salvage from methylthioadenosine"/>
    <property type="evidence" value="ECO:0000318"/>
    <property type="project" value="GO_Central"/>
</dbReference>
<dbReference type="FunFam" id="3.40.225.10:FF:000007">
    <property type="entry name" value="Methylthioribulose-1-phosphate dehydratase"/>
    <property type="match status" value="1"/>
</dbReference>
<dbReference type="Gene3D" id="3.40.225.10">
    <property type="entry name" value="Class II aldolase/adducin N-terminal domain"/>
    <property type="match status" value="1"/>
</dbReference>
<dbReference type="HAMAP" id="MF_01677">
    <property type="entry name" value="Salvage_MtnB"/>
    <property type="match status" value="1"/>
</dbReference>
<dbReference type="InterPro" id="IPR001303">
    <property type="entry name" value="Aldolase_II/adducin_N"/>
</dbReference>
<dbReference type="InterPro" id="IPR036409">
    <property type="entry name" value="Aldolase_II/adducin_N_sf"/>
</dbReference>
<dbReference type="InterPro" id="IPR017714">
    <property type="entry name" value="MethylthioRu-1-P_deHdtase_MtnB"/>
</dbReference>
<dbReference type="NCBIfam" id="NF005244">
    <property type="entry name" value="PRK06754.1"/>
    <property type="match status" value="1"/>
</dbReference>
<dbReference type="NCBIfam" id="TIGR03328">
    <property type="entry name" value="salvage_mtnB"/>
    <property type="match status" value="1"/>
</dbReference>
<dbReference type="PANTHER" id="PTHR10640">
    <property type="entry name" value="METHYLTHIORIBULOSE-1-PHOSPHATE DEHYDRATASE"/>
    <property type="match status" value="1"/>
</dbReference>
<dbReference type="PANTHER" id="PTHR10640:SF7">
    <property type="entry name" value="METHYLTHIORIBULOSE-1-PHOSPHATE DEHYDRATASE"/>
    <property type="match status" value="1"/>
</dbReference>
<dbReference type="Pfam" id="PF00596">
    <property type="entry name" value="Aldolase_II"/>
    <property type="match status" value="1"/>
</dbReference>
<dbReference type="SMART" id="SM01007">
    <property type="entry name" value="Aldolase_II"/>
    <property type="match status" value="1"/>
</dbReference>
<dbReference type="SUPFAM" id="SSF53639">
    <property type="entry name" value="AraD/HMP-PK domain-like"/>
    <property type="match status" value="1"/>
</dbReference>
<name>MTNB_BACSU</name>
<accession>O31668</accession>